<organism>
    <name type="scientific">Bordetella parapertussis (strain 12822 / ATCC BAA-587 / NCTC 13253)</name>
    <dbReference type="NCBI Taxonomy" id="257311"/>
    <lineage>
        <taxon>Bacteria</taxon>
        <taxon>Pseudomonadati</taxon>
        <taxon>Pseudomonadota</taxon>
        <taxon>Betaproteobacteria</taxon>
        <taxon>Burkholderiales</taxon>
        <taxon>Alcaligenaceae</taxon>
        <taxon>Bordetella</taxon>
    </lineage>
</organism>
<reference key="1">
    <citation type="journal article" date="2003" name="Nat. Genet.">
        <title>Comparative analysis of the genome sequences of Bordetella pertussis, Bordetella parapertussis and Bordetella bronchiseptica.</title>
        <authorList>
            <person name="Parkhill J."/>
            <person name="Sebaihia M."/>
            <person name="Preston A."/>
            <person name="Murphy L.D."/>
            <person name="Thomson N.R."/>
            <person name="Harris D.E."/>
            <person name="Holden M.T.G."/>
            <person name="Churcher C.M."/>
            <person name="Bentley S.D."/>
            <person name="Mungall K.L."/>
            <person name="Cerdeno-Tarraga A.-M."/>
            <person name="Temple L."/>
            <person name="James K.D."/>
            <person name="Harris B."/>
            <person name="Quail M.A."/>
            <person name="Achtman M."/>
            <person name="Atkin R."/>
            <person name="Baker S."/>
            <person name="Basham D."/>
            <person name="Bason N."/>
            <person name="Cherevach I."/>
            <person name="Chillingworth T."/>
            <person name="Collins M."/>
            <person name="Cronin A."/>
            <person name="Davis P."/>
            <person name="Doggett J."/>
            <person name="Feltwell T."/>
            <person name="Goble A."/>
            <person name="Hamlin N."/>
            <person name="Hauser H."/>
            <person name="Holroyd S."/>
            <person name="Jagels K."/>
            <person name="Leather S."/>
            <person name="Moule S."/>
            <person name="Norberczak H."/>
            <person name="O'Neil S."/>
            <person name="Ormond D."/>
            <person name="Price C."/>
            <person name="Rabbinowitsch E."/>
            <person name="Rutter S."/>
            <person name="Sanders M."/>
            <person name="Saunders D."/>
            <person name="Seeger K."/>
            <person name="Sharp S."/>
            <person name="Simmonds M."/>
            <person name="Skelton J."/>
            <person name="Squares R."/>
            <person name="Squares S."/>
            <person name="Stevens K."/>
            <person name="Unwin L."/>
            <person name="Whitehead S."/>
            <person name="Barrell B.G."/>
            <person name="Maskell D.J."/>
        </authorList>
    </citation>
    <scope>NUCLEOTIDE SEQUENCE [LARGE SCALE GENOMIC DNA]</scope>
    <source>
        <strain>12822 / ATCC BAA-587 / NCTC 13253</strain>
    </source>
</reference>
<accession>Q7W7I7</accession>
<evidence type="ECO:0000255" key="1">
    <source>
        <dbReference type="HAMAP-Rule" id="MF_01887"/>
    </source>
</evidence>
<name>RLMB_BORPA</name>
<keyword id="KW-0963">Cytoplasm</keyword>
<keyword id="KW-0489">Methyltransferase</keyword>
<keyword id="KW-0698">rRNA processing</keyword>
<keyword id="KW-0949">S-adenosyl-L-methionine</keyword>
<keyword id="KW-0808">Transferase</keyword>
<gene>
    <name evidence="1" type="primary">rlmB</name>
    <name type="ordered locus">BPP2531</name>
</gene>
<comment type="function">
    <text evidence="1">Specifically methylates the ribose of guanosine 2251 in 23S rRNA.</text>
</comment>
<comment type="catalytic activity">
    <reaction evidence="1">
        <text>guanosine(2251) in 23S rRNA + S-adenosyl-L-methionine = 2'-O-methylguanosine(2251) in 23S rRNA + S-adenosyl-L-homocysteine + H(+)</text>
        <dbReference type="Rhea" id="RHEA:24140"/>
        <dbReference type="Rhea" id="RHEA-COMP:10239"/>
        <dbReference type="Rhea" id="RHEA-COMP:10241"/>
        <dbReference type="ChEBI" id="CHEBI:15378"/>
        <dbReference type="ChEBI" id="CHEBI:57856"/>
        <dbReference type="ChEBI" id="CHEBI:59789"/>
        <dbReference type="ChEBI" id="CHEBI:74269"/>
        <dbReference type="ChEBI" id="CHEBI:74445"/>
        <dbReference type="EC" id="2.1.1.185"/>
    </reaction>
</comment>
<comment type="subcellular location">
    <subcellularLocation>
        <location evidence="1">Cytoplasm</location>
    </subcellularLocation>
</comment>
<comment type="similarity">
    <text evidence="1">Belongs to the class IV-like SAM-binding methyltransferase superfamily. RNA methyltransferase TrmH family. RlmB subfamily.</text>
</comment>
<proteinExistence type="inferred from homology"/>
<sequence>MASTQVLAGFHAVVARLRHAPESIKEIYVEASRRDKRMQTFLEQAERAGRRVHPVAAERLDGLARGTRHQGVVAVAEERSLAVGIDEVLDVIEGPALLLILDGVTDPHNLGACLRTADAAGVHAVIAPRDRAVGLNATVQRVACGAADTVPYLTVTNLARTMRELKERDVWLVGTDDQAGESMHQVDARRSMAWVMGAEGEGMRRLTRETCDQLVRIPMLGSVESLNVSVASAVCLYESVRQRQG</sequence>
<protein>
    <recommendedName>
        <fullName evidence="1">23S rRNA (guanosine-2'-O-)-methyltransferase RlmB</fullName>
        <ecNumber evidence="1">2.1.1.185</ecNumber>
    </recommendedName>
    <alternativeName>
        <fullName evidence="1">23S rRNA (guanosine2251 2'-O)-methyltransferase</fullName>
    </alternativeName>
    <alternativeName>
        <fullName evidence="1">23S rRNA Gm2251 2'-O-methyltransferase</fullName>
    </alternativeName>
</protein>
<dbReference type="EC" id="2.1.1.185" evidence="1"/>
<dbReference type="EMBL" id="BX640430">
    <property type="protein sequence ID" value="CAE37825.1"/>
    <property type="molecule type" value="Genomic_DNA"/>
</dbReference>
<dbReference type="RefSeq" id="WP_003812973.1">
    <property type="nucleotide sequence ID" value="NC_002928.3"/>
</dbReference>
<dbReference type="SMR" id="Q7W7I7"/>
<dbReference type="GeneID" id="69600475"/>
<dbReference type="GeneID" id="93204317"/>
<dbReference type="KEGG" id="bpa:BPP2531"/>
<dbReference type="HOGENOM" id="CLU_021322_0_1_4"/>
<dbReference type="Proteomes" id="UP000001421">
    <property type="component" value="Chromosome"/>
</dbReference>
<dbReference type="GO" id="GO:0005829">
    <property type="term" value="C:cytosol"/>
    <property type="evidence" value="ECO:0007669"/>
    <property type="project" value="TreeGrafter"/>
</dbReference>
<dbReference type="GO" id="GO:0003723">
    <property type="term" value="F:RNA binding"/>
    <property type="evidence" value="ECO:0007669"/>
    <property type="project" value="InterPro"/>
</dbReference>
<dbReference type="GO" id="GO:0070039">
    <property type="term" value="F:rRNA (guanosine-2'-O-)-methyltransferase activity"/>
    <property type="evidence" value="ECO:0007669"/>
    <property type="project" value="UniProtKB-UniRule"/>
</dbReference>
<dbReference type="CDD" id="cd18103">
    <property type="entry name" value="SpoU-like_RlmB"/>
    <property type="match status" value="1"/>
</dbReference>
<dbReference type="FunFam" id="3.40.1280.10:FF:000008">
    <property type="entry name" value="Group 3 RNA methyltransferase TrmH"/>
    <property type="match status" value="1"/>
</dbReference>
<dbReference type="Gene3D" id="3.30.1330.30">
    <property type="match status" value="1"/>
</dbReference>
<dbReference type="Gene3D" id="3.40.1280.10">
    <property type="match status" value="1"/>
</dbReference>
<dbReference type="HAMAP" id="MF_01887">
    <property type="entry name" value="23SrRNA_methyltr_B"/>
    <property type="match status" value="1"/>
</dbReference>
<dbReference type="InterPro" id="IPR024915">
    <property type="entry name" value="23S_rRNA_MeTrfase_RlmB"/>
</dbReference>
<dbReference type="InterPro" id="IPR029028">
    <property type="entry name" value="Alpha/beta_knot_MTases"/>
</dbReference>
<dbReference type="InterPro" id="IPR029064">
    <property type="entry name" value="Ribosomal_eL30-like_sf"/>
</dbReference>
<dbReference type="InterPro" id="IPR004441">
    <property type="entry name" value="rRNA_MeTrfase_TrmH"/>
</dbReference>
<dbReference type="InterPro" id="IPR001537">
    <property type="entry name" value="SpoU_MeTrfase"/>
</dbReference>
<dbReference type="InterPro" id="IPR013123">
    <property type="entry name" value="SpoU_subst-bd"/>
</dbReference>
<dbReference type="InterPro" id="IPR029026">
    <property type="entry name" value="tRNA_m1G_MTases_N"/>
</dbReference>
<dbReference type="NCBIfam" id="TIGR00186">
    <property type="entry name" value="rRNA_methyl_3"/>
    <property type="match status" value="1"/>
</dbReference>
<dbReference type="PANTHER" id="PTHR46429">
    <property type="entry name" value="23S RRNA (GUANOSINE-2'-O-)-METHYLTRANSFERASE RLMB"/>
    <property type="match status" value="1"/>
</dbReference>
<dbReference type="PANTHER" id="PTHR46429:SF1">
    <property type="entry name" value="23S RRNA (GUANOSINE-2'-O-)-METHYLTRANSFERASE RLMB"/>
    <property type="match status" value="1"/>
</dbReference>
<dbReference type="Pfam" id="PF00588">
    <property type="entry name" value="SpoU_methylase"/>
    <property type="match status" value="1"/>
</dbReference>
<dbReference type="Pfam" id="PF08032">
    <property type="entry name" value="SpoU_sub_bind"/>
    <property type="match status" value="1"/>
</dbReference>
<dbReference type="SMART" id="SM00967">
    <property type="entry name" value="SpoU_sub_bind"/>
    <property type="match status" value="1"/>
</dbReference>
<dbReference type="SUPFAM" id="SSF75217">
    <property type="entry name" value="alpha/beta knot"/>
    <property type="match status" value="1"/>
</dbReference>
<dbReference type="SUPFAM" id="SSF55315">
    <property type="entry name" value="L30e-like"/>
    <property type="match status" value="1"/>
</dbReference>
<feature type="chain" id="PRO_0000159779" description="23S rRNA (guanosine-2'-O-)-methyltransferase RlmB">
    <location>
        <begin position="1"/>
        <end position="245"/>
    </location>
</feature>
<feature type="binding site" evidence="1">
    <location>
        <position position="197"/>
    </location>
    <ligand>
        <name>S-adenosyl-L-methionine</name>
        <dbReference type="ChEBI" id="CHEBI:59789"/>
    </ligand>
</feature>
<feature type="binding site" evidence="1">
    <location>
        <position position="217"/>
    </location>
    <ligand>
        <name>S-adenosyl-L-methionine</name>
        <dbReference type="ChEBI" id="CHEBI:59789"/>
    </ligand>
</feature>
<feature type="binding site" evidence="1">
    <location>
        <position position="226"/>
    </location>
    <ligand>
        <name>S-adenosyl-L-methionine</name>
        <dbReference type="ChEBI" id="CHEBI:59789"/>
    </ligand>
</feature>